<accession>A5UM16</accession>
<protein>
    <recommendedName>
        <fullName evidence="1">Phosphoribosylformylglycinamidine cyclo-ligase</fullName>
        <ecNumber evidence="1">6.3.3.1</ecNumber>
    </recommendedName>
    <alternativeName>
        <fullName evidence="1">AIR synthase</fullName>
    </alternativeName>
    <alternativeName>
        <fullName evidence="1">AIRS</fullName>
    </alternativeName>
    <alternativeName>
        <fullName evidence="1">Phosphoribosyl-aminoimidazole synthetase</fullName>
    </alternativeName>
</protein>
<keyword id="KW-0067">ATP-binding</keyword>
<keyword id="KW-0963">Cytoplasm</keyword>
<keyword id="KW-0436">Ligase</keyword>
<keyword id="KW-0547">Nucleotide-binding</keyword>
<keyword id="KW-0658">Purine biosynthesis</keyword>
<gene>
    <name evidence="1" type="primary">purM</name>
    <name type="ordered locus">Msm_1039</name>
</gene>
<sequence length="339" mass="36920">MVTYSESGVDIDLEAVTVSKLASKLKSTLEYRDIITDSGHYAALVRLGDKAIAMSTDGVGSKILIAEMMNKYDTVGIDCIAMVVNDILCVGAEPIALVDYLAVEQPDPERAEEIAEGLVTGAKESRISIIGGETASLPGIIKDFDLAGTGIGFVDVDKIITGEDIEAGDVLIGIESNGIHSNGYSLARKALFDDAGFSIDDKMPNCDTTIGEELIRPTELYVKPIVALFKEEYDIHGLAHITGGGFTNLRRLKKGVGYDIYDLPEAPEIFKLIYQQNVPLEEMYKVFNMGIGFVVITNENEAEKIMETLKDYCNCQIIGKVTDDEKITVKTFEGSEVTY</sequence>
<dbReference type="EC" id="6.3.3.1" evidence="1"/>
<dbReference type="EMBL" id="CP000678">
    <property type="protein sequence ID" value="ABQ87244.1"/>
    <property type="molecule type" value="Genomic_DNA"/>
</dbReference>
<dbReference type="RefSeq" id="WP_011954253.1">
    <property type="nucleotide sequence ID" value="NZ_CP117965.1"/>
</dbReference>
<dbReference type="SMR" id="A5UM16"/>
<dbReference type="STRING" id="420247.Msm_1039"/>
<dbReference type="EnsemblBacteria" id="ABQ87244">
    <property type="protein sequence ID" value="ABQ87244"/>
    <property type="gene ID" value="Msm_1039"/>
</dbReference>
<dbReference type="GeneID" id="78817679"/>
<dbReference type="KEGG" id="msi:Msm_1039"/>
<dbReference type="PATRIC" id="fig|420247.28.peg.1037"/>
<dbReference type="eggNOG" id="arCOG00639">
    <property type="taxonomic scope" value="Archaea"/>
</dbReference>
<dbReference type="HOGENOM" id="CLU_047116_0_0_2"/>
<dbReference type="UniPathway" id="UPA00074">
    <property type="reaction ID" value="UER00129"/>
</dbReference>
<dbReference type="Proteomes" id="UP000001992">
    <property type="component" value="Chromosome"/>
</dbReference>
<dbReference type="GO" id="GO:0005829">
    <property type="term" value="C:cytosol"/>
    <property type="evidence" value="ECO:0007669"/>
    <property type="project" value="TreeGrafter"/>
</dbReference>
<dbReference type="GO" id="GO:0005524">
    <property type="term" value="F:ATP binding"/>
    <property type="evidence" value="ECO:0007669"/>
    <property type="project" value="UniProtKB-KW"/>
</dbReference>
<dbReference type="GO" id="GO:0004637">
    <property type="term" value="F:phosphoribosylamine-glycine ligase activity"/>
    <property type="evidence" value="ECO:0007669"/>
    <property type="project" value="TreeGrafter"/>
</dbReference>
<dbReference type="GO" id="GO:0004641">
    <property type="term" value="F:phosphoribosylformylglycinamidine cyclo-ligase activity"/>
    <property type="evidence" value="ECO:0007669"/>
    <property type="project" value="UniProtKB-UniRule"/>
</dbReference>
<dbReference type="GO" id="GO:0006189">
    <property type="term" value="P:'de novo' IMP biosynthetic process"/>
    <property type="evidence" value="ECO:0007669"/>
    <property type="project" value="UniProtKB-UniRule"/>
</dbReference>
<dbReference type="GO" id="GO:0046084">
    <property type="term" value="P:adenine biosynthetic process"/>
    <property type="evidence" value="ECO:0007669"/>
    <property type="project" value="TreeGrafter"/>
</dbReference>
<dbReference type="CDD" id="cd02196">
    <property type="entry name" value="PurM"/>
    <property type="match status" value="1"/>
</dbReference>
<dbReference type="FunFam" id="3.30.1330.10:FF:000020">
    <property type="entry name" value="Phosphoribosylformylglycinamidine cyclo-ligase"/>
    <property type="match status" value="1"/>
</dbReference>
<dbReference type="FunFam" id="3.90.650.10:FF:000011">
    <property type="entry name" value="Phosphoribosylformylglycinamidine cyclo-ligase"/>
    <property type="match status" value="1"/>
</dbReference>
<dbReference type="Gene3D" id="3.90.650.10">
    <property type="entry name" value="PurM-like C-terminal domain"/>
    <property type="match status" value="1"/>
</dbReference>
<dbReference type="Gene3D" id="3.30.1330.10">
    <property type="entry name" value="PurM-like, N-terminal domain"/>
    <property type="match status" value="1"/>
</dbReference>
<dbReference type="HAMAP" id="MF_00741">
    <property type="entry name" value="AIRS"/>
    <property type="match status" value="1"/>
</dbReference>
<dbReference type="InterPro" id="IPR010918">
    <property type="entry name" value="PurM-like_C_dom"/>
</dbReference>
<dbReference type="InterPro" id="IPR036676">
    <property type="entry name" value="PurM-like_C_sf"/>
</dbReference>
<dbReference type="InterPro" id="IPR016188">
    <property type="entry name" value="PurM-like_N"/>
</dbReference>
<dbReference type="InterPro" id="IPR036921">
    <property type="entry name" value="PurM-like_N_sf"/>
</dbReference>
<dbReference type="InterPro" id="IPR004733">
    <property type="entry name" value="PurM_cligase"/>
</dbReference>
<dbReference type="NCBIfam" id="TIGR00878">
    <property type="entry name" value="purM"/>
    <property type="match status" value="1"/>
</dbReference>
<dbReference type="PANTHER" id="PTHR10520:SF12">
    <property type="entry name" value="TRIFUNCTIONAL PURINE BIOSYNTHETIC PROTEIN ADENOSINE-3"/>
    <property type="match status" value="1"/>
</dbReference>
<dbReference type="PANTHER" id="PTHR10520">
    <property type="entry name" value="TRIFUNCTIONAL PURINE BIOSYNTHETIC PROTEIN ADENOSINE-3-RELATED"/>
    <property type="match status" value="1"/>
</dbReference>
<dbReference type="Pfam" id="PF00586">
    <property type="entry name" value="AIRS"/>
    <property type="match status" value="1"/>
</dbReference>
<dbReference type="Pfam" id="PF02769">
    <property type="entry name" value="AIRS_C"/>
    <property type="match status" value="1"/>
</dbReference>
<dbReference type="SUPFAM" id="SSF56042">
    <property type="entry name" value="PurM C-terminal domain-like"/>
    <property type="match status" value="1"/>
</dbReference>
<dbReference type="SUPFAM" id="SSF55326">
    <property type="entry name" value="PurM N-terminal domain-like"/>
    <property type="match status" value="1"/>
</dbReference>
<evidence type="ECO:0000255" key="1">
    <source>
        <dbReference type="HAMAP-Rule" id="MF_00741"/>
    </source>
</evidence>
<reference key="1">
    <citation type="journal article" date="2007" name="Proc. Natl. Acad. Sci. U.S.A.">
        <title>Genomic and metabolic adaptations of Methanobrevibacter smithii to the human gut.</title>
        <authorList>
            <person name="Samuel B.S."/>
            <person name="Hansen E.E."/>
            <person name="Manchester J.K."/>
            <person name="Coutinho P.M."/>
            <person name="Henrissat B."/>
            <person name="Fulton R."/>
            <person name="Latreille P."/>
            <person name="Kim K."/>
            <person name="Wilson R.K."/>
            <person name="Gordon J.I."/>
        </authorList>
    </citation>
    <scope>NUCLEOTIDE SEQUENCE [LARGE SCALE GENOMIC DNA]</scope>
    <source>
        <strain>ATCC 35061 / DSM 861 / OCM 144 / PS</strain>
    </source>
</reference>
<proteinExistence type="inferred from homology"/>
<comment type="catalytic activity">
    <reaction evidence="1">
        <text>2-formamido-N(1)-(5-O-phospho-beta-D-ribosyl)acetamidine + ATP = 5-amino-1-(5-phospho-beta-D-ribosyl)imidazole + ADP + phosphate + H(+)</text>
        <dbReference type="Rhea" id="RHEA:23032"/>
        <dbReference type="ChEBI" id="CHEBI:15378"/>
        <dbReference type="ChEBI" id="CHEBI:30616"/>
        <dbReference type="ChEBI" id="CHEBI:43474"/>
        <dbReference type="ChEBI" id="CHEBI:137981"/>
        <dbReference type="ChEBI" id="CHEBI:147287"/>
        <dbReference type="ChEBI" id="CHEBI:456216"/>
        <dbReference type="EC" id="6.3.3.1"/>
    </reaction>
</comment>
<comment type="pathway">
    <text evidence="1">Purine metabolism; IMP biosynthesis via de novo pathway; 5-amino-1-(5-phospho-D-ribosyl)imidazole from N(2)-formyl-N(1)-(5-phospho-D-ribosyl)glycinamide: step 2/2.</text>
</comment>
<comment type="subcellular location">
    <subcellularLocation>
        <location evidence="1">Cytoplasm</location>
    </subcellularLocation>
</comment>
<comment type="similarity">
    <text evidence="1">Belongs to the AIR synthase family.</text>
</comment>
<organism>
    <name type="scientific">Methanobrevibacter smithii (strain ATCC 35061 / DSM 861 / OCM 144 / PS)</name>
    <dbReference type="NCBI Taxonomy" id="420247"/>
    <lineage>
        <taxon>Archaea</taxon>
        <taxon>Methanobacteriati</taxon>
        <taxon>Methanobacteriota</taxon>
        <taxon>Methanomada group</taxon>
        <taxon>Methanobacteria</taxon>
        <taxon>Methanobacteriales</taxon>
        <taxon>Methanobacteriaceae</taxon>
        <taxon>Methanobrevibacter</taxon>
    </lineage>
</organism>
<feature type="chain" id="PRO_1000046448" description="Phosphoribosylformylglycinamidine cyclo-ligase">
    <location>
        <begin position="1"/>
        <end position="339"/>
    </location>
</feature>
<name>PUR5_METS3</name>